<proteinExistence type="inferred from homology"/>
<feature type="chain" id="PRO_1000069900" description="Chromosome partition protein MukB">
    <location>
        <begin position="1"/>
        <end position="1489"/>
    </location>
</feature>
<feature type="region of interest" description="Flexible hinge" evidence="1">
    <location>
        <begin position="666"/>
        <end position="783"/>
    </location>
</feature>
<feature type="coiled-coil region" evidence="1">
    <location>
        <begin position="326"/>
        <end position="418"/>
    </location>
</feature>
<feature type="coiled-coil region" evidence="1">
    <location>
        <begin position="444"/>
        <end position="472"/>
    </location>
</feature>
<feature type="coiled-coil region" evidence="1">
    <location>
        <begin position="509"/>
        <end position="602"/>
    </location>
</feature>
<feature type="coiled-coil region" evidence="1">
    <location>
        <begin position="780"/>
        <end position="805"/>
    </location>
</feature>
<feature type="coiled-coil region" evidence="1">
    <location>
        <begin position="835"/>
        <end position="919"/>
    </location>
</feature>
<feature type="coiled-coil region" evidence="1">
    <location>
        <begin position="977"/>
        <end position="1116"/>
    </location>
</feature>
<feature type="coiled-coil region" evidence="1">
    <location>
        <begin position="1209"/>
        <end position="1266"/>
    </location>
</feature>
<feature type="binding site" evidence="1">
    <location>
        <begin position="34"/>
        <end position="41"/>
    </location>
    <ligand>
        <name>ATP</name>
        <dbReference type="ChEBI" id="CHEBI:30616"/>
    </ligand>
</feature>
<comment type="function">
    <text evidence="1">Plays a central role in chromosome condensation, segregation and cell cycle progression. Functions as a homodimer, which is essential for chromosome partition. Involved in negative DNA supercoiling in vivo, and by this means organize and compact chromosomes. May achieve or facilitate chromosome segregation by condensation DNA from both sides of a centrally located replisome during cell division.</text>
</comment>
<comment type="subunit">
    <text evidence="1">Homodimerization via its hinge domain. Binds to DNA via its C-terminal region. Interacts, and probably forms a ternary complex, with MukE and MukF via its C-terminal region. The complex formation is stimulated by calcium or magnesium. Interacts with tubulin-related protein FtsZ.</text>
</comment>
<comment type="subcellular location">
    <subcellularLocation>
        <location evidence="1">Cytoplasm</location>
        <location evidence="1">Nucleoid</location>
    </subcellularLocation>
    <text evidence="1">Restricted to the nucleoid region.</text>
</comment>
<comment type="domain">
    <text evidence="1">The hinge domain, which separates the large intramolecular coiled coil regions, allows the homodimerization, forming a V-shaped homodimer.</text>
</comment>
<comment type="similarity">
    <text evidence="1">Belongs to the SMC family. MukB subfamily.</text>
</comment>
<protein>
    <recommendedName>
        <fullName evidence="1">Chromosome partition protein MukB</fullName>
    </recommendedName>
    <alternativeName>
        <fullName evidence="1">Structural maintenance of chromosome-related protein</fullName>
    </alternativeName>
</protein>
<name>MUKB_CITK8</name>
<reference key="1">
    <citation type="submission" date="2007-08" db="EMBL/GenBank/DDBJ databases">
        <authorList>
            <consortium name="The Citrobacter koseri Genome Sequencing Project"/>
            <person name="McClelland M."/>
            <person name="Sanderson E.K."/>
            <person name="Porwollik S."/>
            <person name="Spieth J."/>
            <person name="Clifton W.S."/>
            <person name="Latreille P."/>
            <person name="Courtney L."/>
            <person name="Wang C."/>
            <person name="Pepin K."/>
            <person name="Bhonagiri V."/>
            <person name="Nash W."/>
            <person name="Johnson M."/>
            <person name="Thiruvilangam P."/>
            <person name="Wilson R."/>
        </authorList>
    </citation>
    <scope>NUCLEOTIDE SEQUENCE [LARGE SCALE GENOMIC DNA]</scope>
    <source>
        <strain>ATCC BAA-895 / CDC 4225-83 / SGSC4696</strain>
    </source>
</reference>
<evidence type="ECO:0000255" key="1">
    <source>
        <dbReference type="HAMAP-Rule" id="MF_01800"/>
    </source>
</evidence>
<dbReference type="EMBL" id="CP000822">
    <property type="protein sequence ID" value="ABV13268.1"/>
    <property type="molecule type" value="Genomic_DNA"/>
</dbReference>
<dbReference type="RefSeq" id="WP_012133000.1">
    <property type="nucleotide sequence ID" value="NC_009792.1"/>
</dbReference>
<dbReference type="SMR" id="A8AIF5"/>
<dbReference type="STRING" id="290338.CKO_02144"/>
<dbReference type="GeneID" id="45136085"/>
<dbReference type="KEGG" id="cko:CKO_02144"/>
<dbReference type="HOGENOM" id="CLU_004430_0_0_6"/>
<dbReference type="OrthoDB" id="6722439at2"/>
<dbReference type="Proteomes" id="UP000008148">
    <property type="component" value="Chromosome"/>
</dbReference>
<dbReference type="GO" id="GO:0005737">
    <property type="term" value="C:cytoplasm"/>
    <property type="evidence" value="ECO:0007669"/>
    <property type="project" value="UniProtKB-UniRule"/>
</dbReference>
<dbReference type="GO" id="GO:0009295">
    <property type="term" value="C:nucleoid"/>
    <property type="evidence" value="ECO:0007669"/>
    <property type="project" value="UniProtKB-SubCell"/>
</dbReference>
<dbReference type="GO" id="GO:0005524">
    <property type="term" value="F:ATP binding"/>
    <property type="evidence" value="ECO:0007669"/>
    <property type="project" value="UniProtKB-UniRule"/>
</dbReference>
<dbReference type="GO" id="GO:0003677">
    <property type="term" value="F:DNA binding"/>
    <property type="evidence" value="ECO:0007669"/>
    <property type="project" value="UniProtKB-UniRule"/>
</dbReference>
<dbReference type="GO" id="GO:0051301">
    <property type="term" value="P:cell division"/>
    <property type="evidence" value="ECO:0007669"/>
    <property type="project" value="UniProtKB-KW"/>
</dbReference>
<dbReference type="GO" id="GO:0030261">
    <property type="term" value="P:chromosome condensation"/>
    <property type="evidence" value="ECO:0007669"/>
    <property type="project" value="UniProtKB-KW"/>
</dbReference>
<dbReference type="GO" id="GO:0007059">
    <property type="term" value="P:chromosome segregation"/>
    <property type="evidence" value="ECO:0007669"/>
    <property type="project" value="UniProtKB-UniRule"/>
</dbReference>
<dbReference type="GO" id="GO:0006260">
    <property type="term" value="P:DNA replication"/>
    <property type="evidence" value="ECO:0007669"/>
    <property type="project" value="UniProtKB-UniRule"/>
</dbReference>
<dbReference type="FunFam" id="3.30.70.3500:FF:000001">
    <property type="entry name" value="Chromosome partition protein MukB"/>
    <property type="match status" value="1"/>
</dbReference>
<dbReference type="FunFam" id="3.40.1140.10:FF:000001">
    <property type="entry name" value="Chromosome partition protein MukB"/>
    <property type="match status" value="1"/>
</dbReference>
<dbReference type="FunFam" id="3.40.1140.10:FF:000002">
    <property type="entry name" value="Chromosome partition protein MukB"/>
    <property type="match status" value="1"/>
</dbReference>
<dbReference type="Gene3D" id="1.10.287.1490">
    <property type="match status" value="1"/>
</dbReference>
<dbReference type="Gene3D" id="1.20.58.850">
    <property type="match status" value="1"/>
</dbReference>
<dbReference type="Gene3D" id="3.40.1140.10">
    <property type="match status" value="2"/>
</dbReference>
<dbReference type="Gene3D" id="1.20.5.420">
    <property type="entry name" value="Immunoglobulin FC, subunit C"/>
    <property type="match status" value="1"/>
</dbReference>
<dbReference type="Gene3D" id="3.30.70.3500">
    <property type="entry name" value="MukB, hinge domain"/>
    <property type="match status" value="1"/>
</dbReference>
<dbReference type="HAMAP" id="MF_01800">
    <property type="entry name" value="MukB"/>
    <property type="match status" value="1"/>
</dbReference>
<dbReference type="InterPro" id="IPR012090">
    <property type="entry name" value="MukB"/>
</dbReference>
<dbReference type="InterPro" id="IPR050308">
    <property type="entry name" value="MukB/SMC"/>
</dbReference>
<dbReference type="InterPro" id="IPR032520">
    <property type="entry name" value="MukB_hinge"/>
</dbReference>
<dbReference type="InterPro" id="IPR042501">
    <property type="entry name" value="MukB_hinge_sf"/>
</dbReference>
<dbReference type="InterPro" id="IPR007406">
    <property type="entry name" value="MukB_N_dom"/>
</dbReference>
<dbReference type="InterPro" id="IPR027417">
    <property type="entry name" value="P-loop_NTPase"/>
</dbReference>
<dbReference type="NCBIfam" id="NF003422">
    <property type="entry name" value="PRK04863.1"/>
    <property type="match status" value="1"/>
</dbReference>
<dbReference type="PANTHER" id="PTHR42963">
    <property type="entry name" value="CHROMOSOME PARTITION PROTEIN MUKB"/>
    <property type="match status" value="1"/>
</dbReference>
<dbReference type="PANTHER" id="PTHR42963:SF1">
    <property type="entry name" value="DUF4476 DOMAIN-CONTAINING PROTEIN"/>
    <property type="match status" value="1"/>
</dbReference>
<dbReference type="Pfam" id="PF04310">
    <property type="entry name" value="MukB"/>
    <property type="match status" value="1"/>
</dbReference>
<dbReference type="Pfam" id="PF16330">
    <property type="entry name" value="MukB_hinge"/>
    <property type="match status" value="1"/>
</dbReference>
<dbReference type="Pfam" id="PF13558">
    <property type="entry name" value="SbcC_Walker_B"/>
    <property type="match status" value="1"/>
</dbReference>
<dbReference type="PIRSF" id="PIRSF005246">
    <property type="entry name" value="MukB"/>
    <property type="match status" value="1"/>
</dbReference>
<dbReference type="SUPFAM" id="SSF52540">
    <property type="entry name" value="P-loop containing nucleoside triphosphate hydrolases"/>
    <property type="match status" value="2"/>
</dbReference>
<organism>
    <name type="scientific">Citrobacter koseri (strain ATCC BAA-895 / CDC 4225-83 / SGSC4696)</name>
    <dbReference type="NCBI Taxonomy" id="290338"/>
    <lineage>
        <taxon>Bacteria</taxon>
        <taxon>Pseudomonadati</taxon>
        <taxon>Pseudomonadota</taxon>
        <taxon>Gammaproteobacteria</taxon>
        <taxon>Enterobacterales</taxon>
        <taxon>Enterobacteriaceae</taxon>
        <taxon>Citrobacter</taxon>
    </lineage>
</organism>
<keyword id="KW-0067">ATP-binding</keyword>
<keyword id="KW-0131">Cell cycle</keyword>
<keyword id="KW-0132">Cell division</keyword>
<keyword id="KW-0159">Chromosome partition</keyword>
<keyword id="KW-0175">Coiled coil</keyword>
<keyword id="KW-0963">Cytoplasm</keyword>
<keyword id="KW-0226">DNA condensation</keyword>
<keyword id="KW-0238">DNA-binding</keyword>
<keyword id="KW-0547">Nucleotide-binding</keyword>
<keyword id="KW-1185">Reference proteome</keyword>
<gene>
    <name evidence="1" type="primary">mukB</name>
    <name type="ordered locus">CKO_02144</name>
</gene>
<accession>A8AIF5</accession>
<sequence>MIERGKFRSLTLINWNGFFARTFDLDELVTTLSGGNGAGKSTTMAAFVTALIPDLTLLHFRNTTEAGATSGSRDKGLHGKLKAGVCYSMLDVLNSRHQRVVVGVRLQQVAGRDRKVDIKPFAIQGLPMSVQPTQLVTETLNERQARVLTLAELKEKLDAMEGVQFKQFNSITDYHSLMFDLGIIARRLRSASDRSKFYRLIEASLYGGISSAITRSLRDYLLPENSGVRKAFQDMEAALRENRMTLEAIRVTQSDRDLFKHLISEATNYVAADYMRHANERRVHLDKALEFRRELYTSRKQLAAEQYKHVDMARELGEHNGAEGDLEADYQAASDHLNLVQTALRQQEKIERYEADLDELQIRLEEQNEVVAEAADMQEENEARAEAAELEVDELKSQLADYQQALDVQQTRAIQYNQAIQALDRAKALCHLPDLTADSAAEWLETFQAKEQEATEKLLSLEQKMSVAQTAHSQFEQAYQLVAAINGPLARNEAWSVARDLLREGVEQRHLAEQVQPLRMRLSELEQRLREQQEAERLLAEFCKRQGKHFDIDELEALHQELEARIAALSDSVSNAHEQRMTLRQEQEQLQSRIQHLMQRAPIWLAAQNSLNQLCEQSGEEFTSSQDVTEYLQQLLEREREAIVERDEVGARKNAVDEEIERLSQPGGSEDSRLNALAERFGGVLLSEIYDDVSFEDAPYFSALYGPSRHAIVVPDLSLIAEQLEGLTDCPEDLYFIEGDPQSFDDSVFSVDELENAVVVKTAERQWRYSRFPTVPIFGRAARENRIESLHAEREGLSERFATLSFDVQKTQRLHQAFSRFIGSHLAVAFEADPEAEIRQLNGRRVELERALATHENDNQQQRIQFEQAKEGVSALNRLLPRLNLLADDTLADRVDEIQERLDDAQEAARFIQQHGNQLAKLEPIVSVLQNDPEQFEQLKEDYAYSQQTQRDARQQAFALTEVVQRRAHFSYSDSAEMLSGNSDLNEKLRQRLEQAEAERTRAREALRGHAAQLSQYNQVLASLKSSYDTKKELLGDLQRELQDIGVRADSGSEERARIRRDELHTQLSNNRSRRNQLEKALTFCEAEMDNLTRRLRKLERDYHEMREQVVTAKAGWCAVMRMVKDNGVERRLHRRELAYLSADELRSMSDKALGALRLAVADNEHLRDVLRMSEDPKRPERKIQFFVAVYQHLRERIRQDIIRTDDPVEAIEQMEIELSRLTEELTSREQKLAISSRSVANIIRKTIQREQNRIRMLNQGLQNVSFGQVNSVRLNVNVRETHATLLDVLSEQHEQHQDLFNSNRLTFSEALAKLYQRLNPQIDMGQRTPQTIGEELLDYRNYLEMEVEVNRGSDGWLRAESGALSTGEAIGTGMSILVMVVQSWEDEGRRLRGKDISPCRLLFLDEAARLDARSIATLFELCERLQMQLIIAAPENISPEKGTTYKLVRKVFHNTEHVHVVGLRGFAPQLSETLPGTGTEDASSQAAG</sequence>